<organismHost>
    <name type="scientific">Homo sapiens</name>
    <name type="common">Human</name>
    <dbReference type="NCBI Taxonomy" id="9606"/>
</organismHost>
<keyword id="KW-0106">Calcium</keyword>
<keyword id="KW-0167">Capsid protein</keyword>
<keyword id="KW-0325">Glycoprotein</keyword>
<keyword id="KW-1038">Host endoplasmic reticulum</keyword>
<keyword id="KW-1043">Host membrane</keyword>
<keyword id="KW-0472">Membrane</keyword>
<keyword id="KW-1152">Outer capsid protein</keyword>
<keyword id="KW-1146">T=13 icosahedral capsid protein</keyword>
<keyword id="KW-0812">Transmembrane</keyword>
<keyword id="KW-1133">Transmembrane helix</keyword>
<keyword id="KW-0946">Virion</keyword>
<feature type="chain" id="PRO_0000369862" description="Outer capsid glycoprotein VP7">
    <location>
        <begin position="1"/>
        <end position="258"/>
    </location>
</feature>
<feature type="transmembrane region" description="Helical" evidence="2">
    <location>
        <begin position="1"/>
        <end position="13" status="uncertain"/>
    </location>
</feature>
<feature type="glycosylation site" description="N-linked (GlcNAc...) asparagine; by host" evidence="2">
    <location>
        <position position="42"/>
    </location>
</feature>
<organism>
    <name type="scientific">Rotavirus X (isolate RVX/Human/Bangladesh/NADRV-B219/2002/GXP[X])</name>
    <name type="common">RV ADRV-N</name>
    <name type="synonym">Rotavirus (isolate novel adult diarrhea rotavirus-B219)</name>
    <dbReference type="NCBI Taxonomy" id="348136"/>
    <lineage>
        <taxon>Viruses</taxon>
        <taxon>Riboviria</taxon>
        <taxon>Orthornavirae</taxon>
        <taxon>Duplornaviricota</taxon>
        <taxon>Resentoviricetes</taxon>
        <taxon>Reovirales</taxon>
        <taxon>Sedoreoviridae</taxon>
        <taxon>Rotavirus</taxon>
    </lineage>
</organism>
<comment type="function">
    <text evidence="1">Outer capsid protein involved in attachment and possibly entry into the host epithelial cell. It is subsequently lost, together with VP4, following virus entry into the host cell. The outer layer contains 780 copies of VP7, grouped as 260 trimers. Rotavirus attachment and entry into the host cell probably involves multiple sequential contacts between the outer capsid proteins VP4 and VP7, and the cell receptors (By similarity).</text>
</comment>
<comment type="subunit">
    <text evidence="1">Homotrimer; in the presence of calcium (By similarity). Acquisition of the capsid outer layer requires a high calcium concentration inside the endoplasmic reticulum. Following cell entry, the low calcium concentration in the cytoplasm is probably responsible for the solubilization of the outer layer (By similarity).</text>
</comment>
<comment type="subcellular location">
    <subcellularLocation>
        <location evidence="3">Virion</location>
    </subcellularLocation>
    <subcellularLocation>
        <location evidence="3">Host rough endoplasmic reticulum membrane</location>
        <topology evidence="3">Single-pass membrane protein</topology>
        <orientation evidence="3">Lumenal side</orientation>
    </subcellularLocation>
    <text evidence="1">Immature double-layered particles assembled in the cytoplasm bud across the membrane of the endoplasmic reticulum, acquiring during this process a transient lipid membrane that is modified with the ER resident viral glycoproteins NSP4 and VP7; these enveloped particles also contain VP4. As the particles move towards the interior of the ER cisternae, the transient lipid membrane and the non-structural protein NSP4 are lost, while the virus surface proteins VP4 and VP7 rearrange to form the outermost virus protein layer, yielding mature infectious triple-layered particles (By similarity).</text>
</comment>
<comment type="similarity">
    <text evidence="3">Belongs to the rotavirus VP7 family.</text>
</comment>
<proteinExistence type="inferred from homology"/>
<dbReference type="EMBL" id="DQ168034">
    <property type="protein sequence ID" value="ABA60394.1"/>
    <property type="molecule type" value="Genomic_RNA"/>
</dbReference>
<dbReference type="Proteomes" id="UP000174021">
    <property type="component" value="Genome"/>
</dbReference>
<dbReference type="GO" id="GO:0044169">
    <property type="term" value="C:host cell rough endoplasmic reticulum membrane"/>
    <property type="evidence" value="ECO:0007669"/>
    <property type="project" value="UniProtKB-SubCell"/>
</dbReference>
<dbReference type="GO" id="GO:0016020">
    <property type="term" value="C:membrane"/>
    <property type="evidence" value="ECO:0007669"/>
    <property type="project" value="UniProtKB-KW"/>
</dbReference>
<dbReference type="GO" id="GO:0039621">
    <property type="term" value="C:T=13 icosahedral viral capsid"/>
    <property type="evidence" value="ECO:0007669"/>
    <property type="project" value="UniProtKB-KW"/>
</dbReference>
<dbReference type="GO" id="GO:0039624">
    <property type="term" value="C:viral outer capsid"/>
    <property type="evidence" value="ECO:0007669"/>
    <property type="project" value="UniProtKB-KW"/>
</dbReference>
<dbReference type="InterPro" id="IPR008818">
    <property type="entry name" value="Rotavirus_VP7"/>
</dbReference>
<dbReference type="Pfam" id="PF05868">
    <property type="entry name" value="Rotavirus_VP7"/>
    <property type="match status" value="1"/>
</dbReference>
<evidence type="ECO:0000250" key="1"/>
<evidence type="ECO:0000255" key="2"/>
<evidence type="ECO:0000305" key="3"/>
<protein>
    <recommendedName>
        <fullName>Outer capsid glycoprotein VP7</fullName>
    </recommendedName>
</protein>
<name>VP7_ROTB2</name>
<reference key="1">
    <citation type="journal article" date="2007" name="Arch. Virol.">
        <title>Genetic analysis of an ADRV-N-like novel rotavirus strain B219 detected in a sporadic case of adult diarrhea in Bangladesh.</title>
        <authorList>
            <person name="Alam M.M."/>
            <person name="Kobayashi N."/>
            <person name="Ishino M."/>
            <person name="Ahmed M.S."/>
            <person name="Ahmed M.U."/>
            <person name="Paul S.K."/>
            <person name="Muzumdar B.K."/>
            <person name="Hussain Z."/>
            <person name="Wang Y.H."/>
            <person name="Naik T.N."/>
        </authorList>
    </citation>
    <scope>NUCLEOTIDE SEQUENCE [GENOMIC RNA]</scope>
</reference>
<accession>Q0H8C3</accession>
<sequence>MLLFIILSVGVDAISYIQNDRSNDLCIIYEMTSFGASFNNANDSLVKLHRHMGLKYEICKIESNANALTQMQKCNCLYDDTPQIVVFTNFRKSSLKTLIGTENKCELLPQTTIYTPTVDIESEYFIYGNDVKICYLDKNLLGIGCDATDTTSWLDLDAGLPTNHAIDIPEITSDGFKLFAKYGDSFLCQRLMDEPKKQIQFYAEVDNVPSNDVIESSRSWASVWKVVKTVLHFTYHILDLFYGNKRATARMIEHSPLG</sequence>